<name>RS14_ACIB5</name>
<organism>
    <name type="scientific">Acinetobacter baumannii (strain AB0057)</name>
    <dbReference type="NCBI Taxonomy" id="480119"/>
    <lineage>
        <taxon>Bacteria</taxon>
        <taxon>Pseudomonadati</taxon>
        <taxon>Pseudomonadota</taxon>
        <taxon>Gammaproteobacteria</taxon>
        <taxon>Moraxellales</taxon>
        <taxon>Moraxellaceae</taxon>
        <taxon>Acinetobacter</taxon>
        <taxon>Acinetobacter calcoaceticus/baumannii complex</taxon>
    </lineage>
</organism>
<feature type="chain" id="PRO_1000128276" description="Small ribosomal subunit protein uS14">
    <location>
        <begin position="1"/>
        <end position="101"/>
    </location>
</feature>
<feature type="helix" evidence="3">
    <location>
        <begin position="4"/>
        <end position="31"/>
    </location>
</feature>
<feature type="strand" evidence="3">
    <location>
        <begin position="34"/>
        <end position="36"/>
    </location>
</feature>
<feature type="helix" evidence="3">
    <location>
        <begin position="38"/>
        <end position="50"/>
    </location>
</feature>
<feature type="helix" evidence="3">
    <location>
        <begin position="53"/>
        <end position="55"/>
    </location>
</feature>
<feature type="helix" evidence="3">
    <location>
        <begin position="57"/>
        <end position="59"/>
    </location>
</feature>
<feature type="strand" evidence="3">
    <location>
        <begin position="65"/>
        <end position="67"/>
    </location>
</feature>
<feature type="turn" evidence="3">
    <location>
        <begin position="75"/>
        <end position="77"/>
    </location>
</feature>
<feature type="helix" evidence="3">
    <location>
        <begin position="81"/>
        <end position="90"/>
    </location>
</feature>
<feature type="strand" evidence="3">
    <location>
        <begin position="96"/>
        <end position="98"/>
    </location>
</feature>
<proteinExistence type="evidence at protein level"/>
<keyword id="KW-0002">3D-structure</keyword>
<keyword id="KW-0687">Ribonucleoprotein</keyword>
<keyword id="KW-0689">Ribosomal protein</keyword>
<keyword id="KW-0694">RNA-binding</keyword>
<keyword id="KW-0699">rRNA-binding</keyword>
<comment type="function">
    <text evidence="1">Binds 16S rRNA, required for the assembly of 30S particles and may also be responsible for determining the conformation of the 16S rRNA at the A site.</text>
</comment>
<comment type="subunit">
    <text evidence="1">Part of the 30S ribosomal subunit. Contacts proteins S3 and S10.</text>
</comment>
<comment type="similarity">
    <text evidence="1">Belongs to the universal ribosomal protein uS14 family.</text>
</comment>
<reference key="1">
    <citation type="journal article" date="2008" name="J. Bacteriol.">
        <title>Comparative genome sequence analysis of multidrug-resistant Acinetobacter baumannii.</title>
        <authorList>
            <person name="Adams M.D."/>
            <person name="Goglin K."/>
            <person name="Molyneaux N."/>
            <person name="Hujer K.M."/>
            <person name="Lavender H."/>
            <person name="Jamison J.J."/>
            <person name="MacDonald I.J."/>
            <person name="Martin K.M."/>
            <person name="Russo T."/>
            <person name="Campagnari A.A."/>
            <person name="Hujer A.M."/>
            <person name="Bonomo R.A."/>
            <person name="Gill S.R."/>
        </authorList>
    </citation>
    <scope>NUCLEOTIDE SEQUENCE [LARGE SCALE GENOMIC DNA]</scope>
    <source>
        <strain>AB0057</strain>
    </source>
</reference>
<dbReference type="EMBL" id="CP001182">
    <property type="protein sequence ID" value="ACJ42884.1"/>
    <property type="molecule type" value="Genomic_DNA"/>
</dbReference>
<dbReference type="RefSeq" id="WP_001074624.1">
    <property type="nucleotide sequence ID" value="NC_011586.2"/>
</dbReference>
<dbReference type="PDB" id="6V39">
    <property type="method" value="EM"/>
    <property type="resolution" value="3.04 A"/>
    <property type="chains" value="n=1-101"/>
</dbReference>
<dbReference type="PDB" id="6V3A">
    <property type="method" value="EM"/>
    <property type="resolution" value="2.82 A"/>
    <property type="chains" value="n=1-101"/>
</dbReference>
<dbReference type="PDB" id="6V3B">
    <property type="method" value="EM"/>
    <property type="resolution" value="2.91 A"/>
    <property type="chains" value="n=1-101"/>
</dbReference>
<dbReference type="PDB" id="6V3E">
    <property type="method" value="EM"/>
    <property type="resolution" value="4.40 A"/>
    <property type="chains" value="n=1-101"/>
</dbReference>
<dbReference type="PDB" id="7M4U">
    <property type="method" value="EM"/>
    <property type="resolution" value="2.71 A"/>
    <property type="chains" value="n=1-101"/>
</dbReference>
<dbReference type="PDB" id="7M4W">
    <property type="method" value="EM"/>
    <property type="resolution" value="2.55 A"/>
    <property type="chains" value="n=1-101"/>
</dbReference>
<dbReference type="PDB" id="7M4X">
    <property type="method" value="EM"/>
    <property type="resolution" value="2.66 A"/>
    <property type="chains" value="n=1-101"/>
</dbReference>
<dbReference type="PDB" id="7M4Y">
    <property type="method" value="EM"/>
    <property type="resolution" value="2.50 A"/>
    <property type="chains" value="n=1-101"/>
</dbReference>
<dbReference type="PDB" id="7M4Z">
    <property type="method" value="EM"/>
    <property type="resolution" value="2.92 A"/>
    <property type="chains" value="n=1-101"/>
</dbReference>
<dbReference type="PDB" id="7RYF">
    <property type="method" value="EM"/>
    <property type="resolution" value="2.65 A"/>
    <property type="chains" value="n=1-101"/>
</dbReference>
<dbReference type="PDB" id="7RYG">
    <property type="method" value="EM"/>
    <property type="resolution" value="2.38 A"/>
    <property type="chains" value="n=1-101"/>
</dbReference>
<dbReference type="PDB" id="7RYH">
    <property type="method" value="EM"/>
    <property type="resolution" value="2.43 A"/>
    <property type="chains" value="n=1-101"/>
</dbReference>
<dbReference type="PDB" id="7UVV">
    <property type="method" value="EM"/>
    <property type="resolution" value="2.50 A"/>
    <property type="chains" value="n=1-101"/>
</dbReference>
<dbReference type="PDB" id="7UVW">
    <property type="method" value="EM"/>
    <property type="resolution" value="2.37 A"/>
    <property type="chains" value="n=1-101"/>
</dbReference>
<dbReference type="PDB" id="7UVX">
    <property type="method" value="EM"/>
    <property type="resolution" value="2.35 A"/>
    <property type="chains" value="n=1-101"/>
</dbReference>
<dbReference type="PDB" id="7UVY">
    <property type="method" value="EM"/>
    <property type="resolution" value="2.39 A"/>
    <property type="chains" value="n=1-101"/>
</dbReference>
<dbReference type="PDB" id="7UVZ">
    <property type="method" value="EM"/>
    <property type="resolution" value="2.21 A"/>
    <property type="chains" value="n=1-101"/>
</dbReference>
<dbReference type="PDB" id="7UW1">
    <property type="method" value="EM"/>
    <property type="resolution" value="2.21 A"/>
    <property type="chains" value="n=1-101"/>
</dbReference>
<dbReference type="PDBsum" id="6V39"/>
<dbReference type="PDBsum" id="6V3A"/>
<dbReference type="PDBsum" id="6V3B"/>
<dbReference type="PDBsum" id="6V3E"/>
<dbReference type="PDBsum" id="7M4U"/>
<dbReference type="PDBsum" id="7M4W"/>
<dbReference type="PDBsum" id="7M4X"/>
<dbReference type="PDBsum" id="7M4Y"/>
<dbReference type="PDBsum" id="7M4Z"/>
<dbReference type="PDBsum" id="7RYF"/>
<dbReference type="PDBsum" id="7RYG"/>
<dbReference type="PDBsum" id="7RYH"/>
<dbReference type="PDBsum" id="7UVV"/>
<dbReference type="PDBsum" id="7UVW"/>
<dbReference type="PDBsum" id="7UVX"/>
<dbReference type="PDBsum" id="7UVY"/>
<dbReference type="PDBsum" id="7UVZ"/>
<dbReference type="PDBsum" id="7UW1"/>
<dbReference type="EMDB" id="EMD-21030"/>
<dbReference type="EMDB" id="EMD-21031"/>
<dbReference type="EMDB" id="EMD-21032"/>
<dbReference type="EMDB" id="EMD-21034"/>
<dbReference type="EMDB" id="EMD-23666"/>
<dbReference type="EMDB" id="EMD-23668"/>
<dbReference type="EMDB" id="EMD-23669"/>
<dbReference type="EMDB" id="EMD-23670"/>
<dbReference type="EMDB" id="EMD-23671"/>
<dbReference type="EMDB" id="EMD-24738"/>
<dbReference type="EMDB" id="EMD-24739"/>
<dbReference type="EMDB" id="EMD-24740"/>
<dbReference type="EMDB" id="EMD-26817"/>
<dbReference type="EMDB" id="EMD-26818"/>
<dbReference type="EMDB" id="EMD-26819"/>
<dbReference type="EMDB" id="EMD-26820"/>
<dbReference type="EMDB" id="EMD-26821"/>
<dbReference type="EMDB" id="EMD-26822"/>
<dbReference type="SMR" id="B7IA26"/>
<dbReference type="IntAct" id="B7IA26">
    <property type="interactions" value="1"/>
</dbReference>
<dbReference type="GeneID" id="92895304"/>
<dbReference type="KEGG" id="abn:AB57_3517"/>
<dbReference type="HOGENOM" id="CLU_139869_0_1_6"/>
<dbReference type="Proteomes" id="UP000007094">
    <property type="component" value="Chromosome"/>
</dbReference>
<dbReference type="GO" id="GO:0005737">
    <property type="term" value="C:cytoplasm"/>
    <property type="evidence" value="ECO:0007669"/>
    <property type="project" value="UniProtKB-ARBA"/>
</dbReference>
<dbReference type="GO" id="GO:0015935">
    <property type="term" value="C:small ribosomal subunit"/>
    <property type="evidence" value="ECO:0007669"/>
    <property type="project" value="TreeGrafter"/>
</dbReference>
<dbReference type="GO" id="GO:0019843">
    <property type="term" value="F:rRNA binding"/>
    <property type="evidence" value="ECO:0007669"/>
    <property type="project" value="UniProtKB-UniRule"/>
</dbReference>
<dbReference type="GO" id="GO:0003735">
    <property type="term" value="F:structural constituent of ribosome"/>
    <property type="evidence" value="ECO:0007669"/>
    <property type="project" value="InterPro"/>
</dbReference>
<dbReference type="GO" id="GO:0006412">
    <property type="term" value="P:translation"/>
    <property type="evidence" value="ECO:0007669"/>
    <property type="project" value="UniProtKB-UniRule"/>
</dbReference>
<dbReference type="FunFam" id="1.10.287.1480:FF:000001">
    <property type="entry name" value="30S ribosomal protein S14"/>
    <property type="match status" value="1"/>
</dbReference>
<dbReference type="Gene3D" id="1.10.287.1480">
    <property type="match status" value="1"/>
</dbReference>
<dbReference type="HAMAP" id="MF_00537">
    <property type="entry name" value="Ribosomal_uS14_1"/>
    <property type="match status" value="1"/>
</dbReference>
<dbReference type="InterPro" id="IPR001209">
    <property type="entry name" value="Ribosomal_uS14"/>
</dbReference>
<dbReference type="InterPro" id="IPR023036">
    <property type="entry name" value="Ribosomal_uS14_bac/plastid"/>
</dbReference>
<dbReference type="InterPro" id="IPR018271">
    <property type="entry name" value="Ribosomal_uS14_CS"/>
</dbReference>
<dbReference type="NCBIfam" id="NF006477">
    <property type="entry name" value="PRK08881.1"/>
    <property type="match status" value="1"/>
</dbReference>
<dbReference type="PANTHER" id="PTHR19836">
    <property type="entry name" value="30S RIBOSOMAL PROTEIN S14"/>
    <property type="match status" value="1"/>
</dbReference>
<dbReference type="PANTHER" id="PTHR19836:SF19">
    <property type="entry name" value="SMALL RIBOSOMAL SUBUNIT PROTEIN US14M"/>
    <property type="match status" value="1"/>
</dbReference>
<dbReference type="Pfam" id="PF00253">
    <property type="entry name" value="Ribosomal_S14"/>
    <property type="match status" value="1"/>
</dbReference>
<dbReference type="SUPFAM" id="SSF57716">
    <property type="entry name" value="Glucocorticoid receptor-like (DNA-binding domain)"/>
    <property type="match status" value="1"/>
</dbReference>
<dbReference type="PROSITE" id="PS00527">
    <property type="entry name" value="RIBOSOMAL_S14"/>
    <property type="match status" value="1"/>
</dbReference>
<sequence>MAKKGMINRELKREKTVAKYAAKRAELKATIANVNASDEERFEAMLKLQALPRNASPVRLRNRCGLTGRPHGYFRKFGLSRNKLRDTVMQGDVPGVVKASW</sequence>
<accession>B7IA26</accession>
<protein>
    <recommendedName>
        <fullName evidence="1">Small ribosomal subunit protein uS14</fullName>
    </recommendedName>
    <alternativeName>
        <fullName evidence="2">30S ribosomal protein S14</fullName>
    </alternativeName>
</protein>
<evidence type="ECO:0000255" key="1">
    <source>
        <dbReference type="HAMAP-Rule" id="MF_00537"/>
    </source>
</evidence>
<evidence type="ECO:0000305" key="2"/>
<evidence type="ECO:0007829" key="3">
    <source>
        <dbReference type="PDB" id="7M4U"/>
    </source>
</evidence>
<gene>
    <name evidence="1" type="primary">rpsN</name>
    <name type="ordered locus">AB57_3517</name>
</gene>